<name>Y021_BACC1</name>
<dbReference type="EMBL" id="AE017194">
    <property type="protein sequence ID" value="AAS38957.1"/>
    <property type="molecule type" value="Genomic_DNA"/>
</dbReference>
<dbReference type="SMR" id="Q73FI5"/>
<dbReference type="KEGG" id="bca:BCE_0021"/>
<dbReference type="HOGENOM" id="CLU_140930_1_0_9"/>
<dbReference type="Proteomes" id="UP000002527">
    <property type="component" value="Chromosome"/>
</dbReference>
<dbReference type="GO" id="GO:0043590">
    <property type="term" value="C:bacterial nucleoid"/>
    <property type="evidence" value="ECO:0007669"/>
    <property type="project" value="UniProtKB-UniRule"/>
</dbReference>
<dbReference type="GO" id="GO:0005829">
    <property type="term" value="C:cytosol"/>
    <property type="evidence" value="ECO:0007669"/>
    <property type="project" value="TreeGrafter"/>
</dbReference>
<dbReference type="GO" id="GO:0003677">
    <property type="term" value="F:DNA binding"/>
    <property type="evidence" value="ECO:0007669"/>
    <property type="project" value="UniProtKB-UniRule"/>
</dbReference>
<dbReference type="FunFam" id="3.30.1310.10:FF:000002">
    <property type="entry name" value="Nucleoid-associated protein IKC_06587"/>
    <property type="match status" value="1"/>
</dbReference>
<dbReference type="Gene3D" id="3.30.1310.10">
    <property type="entry name" value="Nucleoid-associated protein YbaB-like domain"/>
    <property type="match status" value="1"/>
</dbReference>
<dbReference type="HAMAP" id="MF_00274">
    <property type="entry name" value="DNA_YbaB_EbfC"/>
    <property type="match status" value="1"/>
</dbReference>
<dbReference type="InterPro" id="IPR036894">
    <property type="entry name" value="YbaB-like_sf"/>
</dbReference>
<dbReference type="InterPro" id="IPR004401">
    <property type="entry name" value="YbaB/EbfC"/>
</dbReference>
<dbReference type="NCBIfam" id="TIGR00103">
    <property type="entry name" value="DNA_YbaB_EbfC"/>
    <property type="match status" value="1"/>
</dbReference>
<dbReference type="PANTHER" id="PTHR33449">
    <property type="entry name" value="NUCLEOID-ASSOCIATED PROTEIN YBAB"/>
    <property type="match status" value="1"/>
</dbReference>
<dbReference type="PANTHER" id="PTHR33449:SF1">
    <property type="entry name" value="NUCLEOID-ASSOCIATED PROTEIN YBAB"/>
    <property type="match status" value="1"/>
</dbReference>
<dbReference type="Pfam" id="PF02575">
    <property type="entry name" value="YbaB_DNA_bd"/>
    <property type="match status" value="1"/>
</dbReference>
<dbReference type="PIRSF" id="PIRSF004555">
    <property type="entry name" value="UCP004555"/>
    <property type="match status" value="1"/>
</dbReference>
<dbReference type="SUPFAM" id="SSF82607">
    <property type="entry name" value="YbaB-like"/>
    <property type="match status" value="1"/>
</dbReference>
<protein>
    <recommendedName>
        <fullName evidence="1">Nucleoid-associated protein BCE_0021</fullName>
    </recommendedName>
</protein>
<proteinExistence type="inferred from homology"/>
<accession>Q73FI5</accession>
<comment type="function">
    <text evidence="1">Binds to DNA and alters its conformation. May be involved in regulation of gene expression, nucleoid organization and DNA protection.</text>
</comment>
<comment type="subunit">
    <text evidence="1">Homodimer.</text>
</comment>
<comment type="subcellular location">
    <subcellularLocation>
        <location evidence="1">Cytoplasm</location>
        <location evidence="1">Nucleoid</location>
    </subcellularLocation>
</comment>
<comment type="similarity">
    <text evidence="1">Belongs to the YbaB/EbfC family.</text>
</comment>
<organism>
    <name type="scientific">Bacillus cereus (strain ATCC 10987 / NRS 248)</name>
    <dbReference type="NCBI Taxonomy" id="222523"/>
    <lineage>
        <taxon>Bacteria</taxon>
        <taxon>Bacillati</taxon>
        <taxon>Bacillota</taxon>
        <taxon>Bacilli</taxon>
        <taxon>Bacillales</taxon>
        <taxon>Bacillaceae</taxon>
        <taxon>Bacillus</taxon>
        <taxon>Bacillus cereus group</taxon>
    </lineage>
</organism>
<evidence type="ECO:0000255" key="1">
    <source>
        <dbReference type="HAMAP-Rule" id="MF_00274"/>
    </source>
</evidence>
<feature type="chain" id="PRO_1000003684" description="Nucleoid-associated protein BCE_0021">
    <location>
        <begin position="1"/>
        <end position="109"/>
    </location>
</feature>
<gene>
    <name type="ordered locus">BCE_0021</name>
</gene>
<sequence>MMRGGMGNMNNMMKQMQKMQKEMAKAQEELGEKTVEGTAGGGMITVIANGHKQILEVKVKEEVVDPEDIEMLQDLVLAATNDALKKADELSNSTMGKFTKGLNLPGGMF</sequence>
<reference key="1">
    <citation type="journal article" date="2004" name="Nucleic Acids Res.">
        <title>The genome sequence of Bacillus cereus ATCC 10987 reveals metabolic adaptations and a large plasmid related to Bacillus anthracis pXO1.</title>
        <authorList>
            <person name="Rasko D.A."/>
            <person name="Ravel J."/>
            <person name="Oekstad O.A."/>
            <person name="Helgason E."/>
            <person name="Cer R.Z."/>
            <person name="Jiang L."/>
            <person name="Shores K.A."/>
            <person name="Fouts D.E."/>
            <person name="Tourasse N.J."/>
            <person name="Angiuoli S.V."/>
            <person name="Kolonay J.F."/>
            <person name="Nelson W.C."/>
            <person name="Kolstoe A.-B."/>
            <person name="Fraser C.M."/>
            <person name="Read T.D."/>
        </authorList>
    </citation>
    <scope>NUCLEOTIDE SEQUENCE [LARGE SCALE GENOMIC DNA]</scope>
    <source>
        <strain>ATCC 10987 / NRS 248</strain>
    </source>
</reference>
<keyword id="KW-0963">Cytoplasm</keyword>
<keyword id="KW-0238">DNA-binding</keyword>